<feature type="chain" id="PRO_1000024255" description="Biosynthetic arginine decarboxylase">
    <location>
        <begin position="1"/>
        <end position="630"/>
    </location>
</feature>
<feature type="binding site" evidence="1">
    <location>
        <begin position="281"/>
        <end position="291"/>
    </location>
    <ligand>
        <name>substrate</name>
    </ligand>
</feature>
<feature type="modified residue" description="N6-(pyridoxal phosphate)lysine" evidence="1">
    <location>
        <position position="99"/>
    </location>
</feature>
<name>SPEA_BACFR</name>
<evidence type="ECO:0000255" key="1">
    <source>
        <dbReference type="HAMAP-Rule" id="MF_01417"/>
    </source>
</evidence>
<accession>Q64ZT8</accession>
<sequence>MRKWRIEDSEELYNITGWGTSYFGINDKGHVVVTPRKDGVAVDLKELVDELQLRDVAAPMLVRFPDILDNRIEKTAYCFKQASEEYGYKAQNFIIYPIKVNQMRPVVEEIISHGKKFNLGLEAGSKPELHAVIAVNTDSDSLIICNGYKDESYIELALLAQKMGKRIFLVVEKMNELKLIARMAKQLNVQPNIGIRIKLASSGSGKWEESGGDASKFGLTSSELLEALDFLESKGMKDCLKLIHFHIGSQVTKIRRIKTALREASQFYVQLHAMGFNVEFVDIGGGLGVDYDGTRSSSSESSVNYSIQEYVNDSISTLVDASDKNGIPHPNIITESGRALTAHHSVLIFEVLETATLPQWDDEEEIAPDAHELVQELYGIWDTLNQNKMLEAWHDAQQIREEALDLFSHGIVDLKTRAQIERLYWSITREINQIAGGLKHAPDEFRGLSKLLADKYFCNFSLFQSLPDSWAIDQIFPIMPIQRLDEKPDRSATLQDITCDSDGKIANFISTRNVAHYMPVHSLKQKEPYYVAVFLVGAYQEILGDMHNLFGDTNAVHVSVNEKGYNIEQIIDGETVAEVLDYVQYSPKKLVRTLETWVTKSVKEGKISVEEGKEFLSNYRSGLYGYTYLE</sequence>
<reference key="1">
    <citation type="journal article" date="2004" name="Proc. Natl. Acad. Sci. U.S.A.">
        <title>Genomic analysis of Bacteroides fragilis reveals extensive DNA inversions regulating cell surface adaptation.</title>
        <authorList>
            <person name="Kuwahara T."/>
            <person name="Yamashita A."/>
            <person name="Hirakawa H."/>
            <person name="Nakayama H."/>
            <person name="Toh H."/>
            <person name="Okada N."/>
            <person name="Kuhara S."/>
            <person name="Hattori M."/>
            <person name="Hayashi T."/>
            <person name="Ohnishi Y."/>
        </authorList>
    </citation>
    <scope>NUCLEOTIDE SEQUENCE [LARGE SCALE GENOMIC DNA]</scope>
    <source>
        <strain>YCH46</strain>
    </source>
</reference>
<comment type="function">
    <text evidence="1">Catalyzes the biosynthesis of agmatine from arginine.</text>
</comment>
<comment type="catalytic activity">
    <reaction evidence="1">
        <text>L-arginine + H(+) = agmatine + CO2</text>
        <dbReference type="Rhea" id="RHEA:17641"/>
        <dbReference type="ChEBI" id="CHEBI:15378"/>
        <dbReference type="ChEBI" id="CHEBI:16526"/>
        <dbReference type="ChEBI" id="CHEBI:32682"/>
        <dbReference type="ChEBI" id="CHEBI:58145"/>
        <dbReference type="EC" id="4.1.1.19"/>
    </reaction>
</comment>
<comment type="cofactor">
    <cofactor evidence="1">
        <name>Mg(2+)</name>
        <dbReference type="ChEBI" id="CHEBI:18420"/>
    </cofactor>
</comment>
<comment type="cofactor">
    <cofactor evidence="1">
        <name>pyridoxal 5'-phosphate</name>
        <dbReference type="ChEBI" id="CHEBI:597326"/>
    </cofactor>
</comment>
<comment type="pathway">
    <text evidence="1">Amine and polyamine biosynthesis; agmatine biosynthesis; agmatine from L-arginine: step 1/1.</text>
</comment>
<comment type="similarity">
    <text evidence="1">Belongs to the Orn/Lys/Arg decarboxylase class-II family. SpeA subfamily.</text>
</comment>
<proteinExistence type="inferred from homology"/>
<protein>
    <recommendedName>
        <fullName evidence="1">Biosynthetic arginine decarboxylase</fullName>
        <shortName evidence="1">ADC</shortName>
        <ecNumber evidence="1">4.1.1.19</ecNumber>
    </recommendedName>
</protein>
<gene>
    <name evidence="1" type="primary">speA</name>
    <name type="ordered locus">BF0239</name>
</gene>
<organism>
    <name type="scientific">Bacteroides fragilis (strain YCH46)</name>
    <dbReference type="NCBI Taxonomy" id="295405"/>
    <lineage>
        <taxon>Bacteria</taxon>
        <taxon>Pseudomonadati</taxon>
        <taxon>Bacteroidota</taxon>
        <taxon>Bacteroidia</taxon>
        <taxon>Bacteroidales</taxon>
        <taxon>Bacteroidaceae</taxon>
        <taxon>Bacteroides</taxon>
    </lineage>
</organism>
<dbReference type="EC" id="4.1.1.19" evidence="1"/>
<dbReference type="EMBL" id="AP006841">
    <property type="protein sequence ID" value="BAD46988.1"/>
    <property type="molecule type" value="Genomic_DNA"/>
</dbReference>
<dbReference type="RefSeq" id="WP_005783873.1">
    <property type="nucleotide sequence ID" value="NZ_UYXF01000014.1"/>
</dbReference>
<dbReference type="RefSeq" id="YP_097522.1">
    <property type="nucleotide sequence ID" value="NC_006347.1"/>
</dbReference>
<dbReference type="SMR" id="Q64ZT8"/>
<dbReference type="STRING" id="295405.BF0239"/>
<dbReference type="GeneID" id="60368283"/>
<dbReference type="KEGG" id="bfr:BF0239"/>
<dbReference type="PATRIC" id="fig|295405.11.peg.269"/>
<dbReference type="HOGENOM" id="CLU_027243_1_0_10"/>
<dbReference type="OrthoDB" id="9802658at2"/>
<dbReference type="UniPathway" id="UPA00186">
    <property type="reaction ID" value="UER00284"/>
</dbReference>
<dbReference type="Proteomes" id="UP000002197">
    <property type="component" value="Chromosome"/>
</dbReference>
<dbReference type="GO" id="GO:0008792">
    <property type="term" value="F:arginine decarboxylase activity"/>
    <property type="evidence" value="ECO:0007669"/>
    <property type="project" value="UniProtKB-UniRule"/>
</dbReference>
<dbReference type="GO" id="GO:0046872">
    <property type="term" value="F:metal ion binding"/>
    <property type="evidence" value="ECO:0007669"/>
    <property type="project" value="UniProtKB-KW"/>
</dbReference>
<dbReference type="GO" id="GO:0006527">
    <property type="term" value="P:arginine catabolic process"/>
    <property type="evidence" value="ECO:0007669"/>
    <property type="project" value="InterPro"/>
</dbReference>
<dbReference type="GO" id="GO:0008295">
    <property type="term" value="P:spermidine biosynthetic process"/>
    <property type="evidence" value="ECO:0007669"/>
    <property type="project" value="UniProtKB-UniRule"/>
</dbReference>
<dbReference type="CDD" id="cd06830">
    <property type="entry name" value="PLPDE_III_ADC"/>
    <property type="match status" value="1"/>
</dbReference>
<dbReference type="FunFam" id="1.20.58.930:FF:000002">
    <property type="entry name" value="Biosynthetic arginine decarboxylase"/>
    <property type="match status" value="1"/>
</dbReference>
<dbReference type="FunFam" id="3.20.20.10:FF:000001">
    <property type="entry name" value="Biosynthetic arginine decarboxylase"/>
    <property type="match status" value="1"/>
</dbReference>
<dbReference type="Gene3D" id="1.10.287.3440">
    <property type="match status" value="1"/>
</dbReference>
<dbReference type="Gene3D" id="1.20.58.930">
    <property type="match status" value="1"/>
</dbReference>
<dbReference type="Gene3D" id="3.20.20.10">
    <property type="entry name" value="Alanine racemase"/>
    <property type="match status" value="1"/>
</dbReference>
<dbReference type="Gene3D" id="2.40.37.10">
    <property type="entry name" value="Lyase, Ornithine Decarboxylase, Chain A, domain 1"/>
    <property type="match status" value="1"/>
</dbReference>
<dbReference type="HAMAP" id="MF_01417">
    <property type="entry name" value="SpeA"/>
    <property type="match status" value="1"/>
</dbReference>
<dbReference type="InterPro" id="IPR009006">
    <property type="entry name" value="Ala_racemase/Decarboxylase_C"/>
</dbReference>
<dbReference type="InterPro" id="IPR040634">
    <property type="entry name" value="Arg_decarb_HB"/>
</dbReference>
<dbReference type="InterPro" id="IPR041128">
    <property type="entry name" value="Arg_decarbox_C"/>
</dbReference>
<dbReference type="InterPro" id="IPR002985">
    <property type="entry name" value="Arg_decrbxlase"/>
</dbReference>
<dbReference type="InterPro" id="IPR022657">
    <property type="entry name" value="De-COase2_CS"/>
</dbReference>
<dbReference type="InterPro" id="IPR022644">
    <property type="entry name" value="De-COase2_N"/>
</dbReference>
<dbReference type="InterPro" id="IPR022653">
    <property type="entry name" value="De-COase2_pyr-phos_BS"/>
</dbReference>
<dbReference type="InterPro" id="IPR000183">
    <property type="entry name" value="Orn/DAP/Arg_de-COase"/>
</dbReference>
<dbReference type="InterPro" id="IPR029066">
    <property type="entry name" value="PLP-binding_barrel"/>
</dbReference>
<dbReference type="NCBIfam" id="NF003763">
    <property type="entry name" value="PRK05354.1"/>
    <property type="match status" value="1"/>
</dbReference>
<dbReference type="NCBIfam" id="TIGR01273">
    <property type="entry name" value="speA"/>
    <property type="match status" value="1"/>
</dbReference>
<dbReference type="PANTHER" id="PTHR43295">
    <property type="entry name" value="ARGININE DECARBOXYLASE"/>
    <property type="match status" value="1"/>
</dbReference>
<dbReference type="PANTHER" id="PTHR43295:SF9">
    <property type="entry name" value="BIOSYNTHETIC ARGININE DECARBOXYLASE"/>
    <property type="match status" value="1"/>
</dbReference>
<dbReference type="Pfam" id="PF17810">
    <property type="entry name" value="Arg_decarb_HB"/>
    <property type="match status" value="1"/>
</dbReference>
<dbReference type="Pfam" id="PF17944">
    <property type="entry name" value="Arg_decarbox_C"/>
    <property type="match status" value="1"/>
</dbReference>
<dbReference type="Pfam" id="PF02784">
    <property type="entry name" value="Orn_Arg_deC_N"/>
    <property type="match status" value="1"/>
</dbReference>
<dbReference type="PIRSF" id="PIRSF001336">
    <property type="entry name" value="Arg_decrbxlase"/>
    <property type="match status" value="1"/>
</dbReference>
<dbReference type="PRINTS" id="PR01180">
    <property type="entry name" value="ARGDCRBXLASE"/>
</dbReference>
<dbReference type="PRINTS" id="PR01179">
    <property type="entry name" value="ODADCRBXLASE"/>
</dbReference>
<dbReference type="SUPFAM" id="SSF50621">
    <property type="entry name" value="Alanine racemase C-terminal domain-like"/>
    <property type="match status" value="1"/>
</dbReference>
<dbReference type="SUPFAM" id="SSF51419">
    <property type="entry name" value="PLP-binding barrel"/>
    <property type="match status" value="1"/>
</dbReference>
<dbReference type="PROSITE" id="PS00878">
    <property type="entry name" value="ODR_DC_2_1"/>
    <property type="match status" value="1"/>
</dbReference>
<dbReference type="PROSITE" id="PS00879">
    <property type="entry name" value="ODR_DC_2_2"/>
    <property type="match status" value="1"/>
</dbReference>
<keyword id="KW-0210">Decarboxylase</keyword>
<keyword id="KW-0456">Lyase</keyword>
<keyword id="KW-0460">Magnesium</keyword>
<keyword id="KW-0479">Metal-binding</keyword>
<keyword id="KW-0620">Polyamine biosynthesis</keyword>
<keyword id="KW-0663">Pyridoxal phosphate</keyword>
<keyword id="KW-0745">Spermidine biosynthesis</keyword>